<reference key="1">
    <citation type="journal article" date="1989" name="J. Biol. Chem.">
        <title>Primary structure of rat liver dipeptidyl peptidase IV deduced from its cDNA and identification of the NH2-terminal signal sequence as the membrane-anchoring domain.</title>
        <authorList>
            <person name="Ogata S."/>
            <person name="Misumi Y."/>
            <person name="Ikehara Y."/>
        </authorList>
    </citation>
    <scope>NUCLEOTIDE SEQUENCE [MRNA]</scope>
    <scope>PARTIAL PROTEIN SEQUENCE</scope>
</reference>
<reference key="2">
    <citation type="journal article" date="1987" name="Proc. Natl. Acad. Sci. U.S.A.">
        <title>cDNA cloning for a bile canaliculus domain-specific membrane glycoprotein of rat hepatocytes.</title>
        <authorList>
            <person name="Hong W."/>
            <person name="Doyle D."/>
        </authorList>
    </citation>
    <scope>NUCLEOTIDE SEQUENCE [MRNA]</scope>
</reference>
<reference key="3">
    <citation type="journal article" date="1988" name="J. Biol. Chem.">
        <title>Membrane orientation of rat gp110 as studied by in vitro translation.</title>
        <authorList>
            <person name="Hong W.J."/>
            <person name="Doyle D."/>
        </authorList>
    </citation>
    <scope>NUCLEOTIDE SEQUENCE [MRNA] OF 1-40</scope>
</reference>
<reference key="4">
    <citation type="journal article" date="1990" name="Hepatology">
        <title>Identification of the bile canalicular cell surface molecule GP110 as the ectopeptidase dipeptidyl peptidase IV: an analysis by tissue distribution, purification and N-terminal amino acid sequence.</title>
        <authorList>
            <person name="McCaughan G.W."/>
            <person name="Wickson J.E."/>
            <person name="Creswick P.F."/>
            <person name="Gorrell M.D."/>
        </authorList>
    </citation>
    <scope>PROTEIN SEQUENCE OF 28-58</scope>
    <scope>TISSUE SPECIFICITY</scope>
</reference>
<reference key="5">
    <citation type="journal article" date="1993" name="Biol. Chem. Hoppe-Seyler">
        <title>N-terminal amino acid sequence of the 60-kDa protein of rat kidney dipeptidyl peptidase IV.</title>
        <authorList>
            <person name="Iwaki-Egawa S."/>
            <person name="Watanabe Y."/>
            <person name="Fujimoto Y."/>
        </authorList>
    </citation>
    <scope>PROTEIN SEQUENCE OF 281-302</scope>
    <scope>MUTAGENESIS OF GLY-629; TRP-630; SER-631; TYR-632 AND GLY-633</scope>
    <source>
        <tissue>Kidney</tissue>
    </source>
</reference>
<reference key="6">
    <citation type="journal article" date="1992" name="Biochemistry">
        <title>Identification of the active site residues in dipeptidyl peptidase IV by affinity labeling and site-directed mutagenesis.</title>
        <authorList>
            <person name="Ogata S."/>
            <person name="Misumi Y."/>
            <person name="Tsuji E."/>
            <person name="Takami N."/>
            <person name="Oda K."/>
            <person name="Ikehara Y."/>
        </authorList>
    </citation>
    <scope>PROTEIN SEQUENCE OF 624-648</scope>
</reference>
<reference key="7">
    <citation type="journal article" date="1990" name="J. Cell Biol.">
        <title>Molecular dissection of the NH2-terminal signal/anchor sequence of rat dipeptidyl peptidase IV.</title>
        <authorList>
            <person name="Hong W."/>
            <person name="Doyle D."/>
        </authorList>
    </citation>
    <scope>SIGNAL-ANCHOR</scope>
</reference>
<reference key="8">
    <citation type="journal article" date="2006" name="Biochemistry">
        <title>Crystal structures of DPP-IV (CD26) from rat kidney exhibit flexible accommodation of peptidase-selective inhibitors.</title>
        <authorList>
            <person name="Longenecker K.L."/>
            <person name="Stewart K.D."/>
            <person name="Madar D.J."/>
            <person name="Jakob C.G."/>
            <person name="Fry E.H."/>
            <person name="Wilk S."/>
            <person name="Lin C.W."/>
            <person name="Ballaron S.J."/>
            <person name="Stashko M.A."/>
            <person name="Lubben T.H."/>
            <person name="Yong H."/>
            <person name="Pireh D."/>
            <person name="Pei Z."/>
            <person name="Basha F."/>
            <person name="Wiedeman P.E."/>
            <person name="von Geldern T.W."/>
            <person name="Trevillyan J.M."/>
            <person name="Stoll V.S."/>
        </authorList>
    </citation>
    <scope>X-RAY CRYSTALLOGRAPHY (2.8 ANGSTROMS) OF 38-767 IN COMPLEX WITH INHIBITORS</scope>
    <scope>GLYCOSYLATION AT ASN-83; ASN-90; ASN-227; ASN-319 AND ASN-521</scope>
    <scope>DISULFIDE BONDS</scope>
</reference>
<keyword id="KW-0002">3D-structure</keyword>
<keyword id="KW-0031">Aminopeptidase</keyword>
<keyword id="KW-0130">Cell adhesion</keyword>
<keyword id="KW-0965">Cell junction</keyword>
<keyword id="KW-1003">Cell membrane</keyword>
<keyword id="KW-0966">Cell projection</keyword>
<keyword id="KW-0903">Direct protein sequencing</keyword>
<keyword id="KW-1015">Disulfide bond</keyword>
<keyword id="KW-0325">Glycoprotein</keyword>
<keyword id="KW-0378">Hydrolase</keyword>
<keyword id="KW-0472">Membrane</keyword>
<keyword id="KW-0645">Protease</keyword>
<keyword id="KW-1185">Reference proteome</keyword>
<keyword id="KW-0964">Secreted</keyword>
<keyword id="KW-0720">Serine protease</keyword>
<keyword id="KW-0735">Signal-anchor</keyword>
<keyword id="KW-0812">Transmembrane</keyword>
<keyword id="KW-1133">Transmembrane helix</keyword>
<feature type="chain" id="PRO_0000027219" description="Dipeptidyl peptidase 4 membrane form">
    <location>
        <begin position="1"/>
        <end position="767"/>
    </location>
</feature>
<feature type="chain" id="PRO_0000027220" description="Dipeptidyl peptidase 4 soluble form">
    <location>
        <begin position="37"/>
        <end position="767"/>
    </location>
</feature>
<feature type="chain" id="PRO_0000027221" description="Dipeptidyl peptidase 4 60 kDa soluble form">
    <location>
        <begin position="281"/>
        <end position="767"/>
    </location>
</feature>
<feature type="topological domain" description="Cytoplasmic" evidence="3">
    <location>
        <begin position="1"/>
        <end position="6"/>
    </location>
</feature>
<feature type="transmembrane region" description="Helical; Signal-anchor for type II membrane protein" evidence="3">
    <location>
        <begin position="7"/>
        <end position="28"/>
    </location>
</feature>
<feature type="topological domain" description="Extracellular" evidence="3">
    <location>
        <begin position="29"/>
        <end position="767"/>
    </location>
</feature>
<feature type="active site" description="Charge relay system" evidence="4">
    <location>
        <position position="631"/>
    </location>
</feature>
<feature type="active site" description="Charge relay system" evidence="4">
    <location>
        <position position="709"/>
    </location>
</feature>
<feature type="active site" description="Charge relay system" evidence="4">
    <location>
        <position position="741"/>
    </location>
</feature>
<feature type="glycosylation site" description="N-linked (GlcNAc...) asparagine" evidence="5">
    <location>
        <position position="83"/>
    </location>
</feature>
<feature type="glycosylation site" description="N-linked (GlcNAc...) asparagine" evidence="5">
    <location>
        <position position="90"/>
    </location>
</feature>
<feature type="glycosylation site" description="N-linked (GlcNAc...) asparagine" evidence="1">
    <location>
        <position position="148"/>
    </location>
</feature>
<feature type="glycosylation site" description="N-linked (GlcNAc...) asparagine" evidence="1">
    <location>
        <position position="217"/>
    </location>
</feature>
<feature type="glycosylation site" description="N-linked (GlcNAc...) asparagine" evidence="5">
    <location>
        <position position="227"/>
    </location>
</feature>
<feature type="glycosylation site" description="N-linked (GlcNAc...) asparagine" evidence="5">
    <location>
        <position position="319"/>
    </location>
</feature>
<feature type="glycosylation site" description="N-linked (GlcNAc...) asparagine" evidence="5">
    <location>
        <position position="521"/>
    </location>
</feature>
<feature type="glycosylation site" description="N-linked (GlcNAc...) asparagine" evidence="1">
    <location>
        <position position="686"/>
    </location>
</feature>
<feature type="disulfide bond" evidence="5">
    <location>
        <begin position="326"/>
        <end position="337"/>
    </location>
</feature>
<feature type="disulfide bond" evidence="5">
    <location>
        <begin position="383"/>
        <end position="395"/>
    </location>
</feature>
<feature type="disulfide bond" evidence="5">
    <location>
        <begin position="445"/>
        <end position="448"/>
    </location>
</feature>
<feature type="disulfide bond" evidence="5">
    <location>
        <begin position="455"/>
        <end position="473"/>
    </location>
</feature>
<feature type="disulfide bond" evidence="5">
    <location>
        <begin position="650"/>
        <end position="763"/>
    </location>
</feature>
<feature type="mutagenesis site" description="Reduced activity." evidence="7">
    <original>G</original>
    <variation>A</variation>
    <location>
        <position position="629"/>
    </location>
</feature>
<feature type="mutagenesis site" description="Reduced activity." evidence="7">
    <original>G</original>
    <variation>R</variation>
    <location>
        <position position="629"/>
    </location>
</feature>
<feature type="mutagenesis site" description="No effect on activity." evidence="7">
    <original>W</original>
    <variation>E</variation>
    <location>
        <position position="630"/>
    </location>
</feature>
<feature type="mutagenesis site" description="Reduced activity." evidence="7">
    <original>S</original>
    <variation>A</variation>
    <location>
        <position position="631"/>
    </location>
</feature>
<feature type="mutagenesis site" description="No effect on activity." evidence="7">
    <original>Y</original>
    <variation>F</variation>
    <location>
        <position position="632"/>
    </location>
</feature>
<feature type="mutagenesis site" description="Reduced activity." evidence="7">
    <original>Y</original>
    <variation>G</variation>
    <location>
        <position position="632"/>
    </location>
</feature>
<feature type="mutagenesis site" description="Reduced activity." evidence="7">
    <original>Y</original>
    <variation>L</variation>
    <location>
        <position position="632"/>
    </location>
</feature>
<feature type="mutagenesis site" description="Reduced activity." evidence="7">
    <original>G</original>
    <variation>A</variation>
    <location>
        <position position="633"/>
    </location>
</feature>
<feature type="mutagenesis site" description="Reduced activity." evidence="7">
    <original>G</original>
    <variation>S</variation>
    <location>
        <position position="633"/>
    </location>
</feature>
<feature type="sequence conflict" description="In Ref. 1; AAA41096." evidence="8" ref="1">
    <original>R</original>
    <variation>A</variation>
    <location>
        <position position="38"/>
    </location>
</feature>
<feature type="sequence conflict" description="In Ref. 4; AA sequence." evidence="8" ref="4">
    <location>
        <position position="54"/>
    </location>
</feature>
<feature type="sequence conflict" description="In Ref. 2; AAA41272." evidence="8" ref="2">
    <original>I</original>
    <variation>T</variation>
    <location>
        <position position="183"/>
    </location>
</feature>
<feature type="sequence conflict" description="In Ref. 2; AAA41272." evidence="8" ref="2">
    <original>T</original>
    <variation>N</variation>
    <location>
        <position position="332"/>
    </location>
</feature>
<feature type="sequence conflict" description="In Ref. 2; AAA41272." evidence="8" ref="2">
    <original>C</original>
    <variation>V</variation>
    <location>
        <position position="352"/>
    </location>
</feature>
<feature type="sequence conflict" description="In Ref. 2; AAA41272." evidence="8" ref="2">
    <original>V</original>
    <variation>D</variation>
    <location>
        <position position="394"/>
    </location>
</feature>
<feature type="sequence conflict" description="In Ref. 2; AAA41272." evidence="8" ref="2">
    <original>L</original>
    <variation>F</variation>
    <location>
        <position position="562"/>
    </location>
</feature>
<feature type="sequence conflict" description="In Ref. 2; AAA41272." evidence="8" ref="2">
    <original>R</original>
    <variation>Q</variation>
    <location>
        <position position="624"/>
    </location>
</feature>
<feature type="helix" evidence="11">
    <location>
        <begin position="43"/>
        <end position="48"/>
    </location>
</feature>
<feature type="strand" evidence="13">
    <location>
        <begin position="58"/>
        <end position="60"/>
    </location>
</feature>
<feature type="strand" evidence="11">
    <location>
        <begin position="62"/>
        <end position="72"/>
    </location>
</feature>
<feature type="strand" evidence="11">
    <location>
        <begin position="74"/>
        <end position="82"/>
    </location>
</feature>
<feature type="strand" evidence="11">
    <location>
        <begin position="84"/>
        <end position="88"/>
    </location>
</feature>
<feature type="helix" evidence="11">
    <location>
        <begin position="90"/>
        <end position="93"/>
    </location>
</feature>
<feature type="turn" evidence="13">
    <location>
        <begin position="95"/>
        <end position="98"/>
    </location>
</feature>
<feature type="strand" evidence="11">
    <location>
        <begin position="100"/>
        <end position="105"/>
    </location>
</feature>
<feature type="strand" evidence="11">
    <location>
        <begin position="109"/>
        <end position="120"/>
    </location>
</feature>
<feature type="strand" evidence="11">
    <location>
        <begin position="122"/>
        <end position="124"/>
    </location>
</feature>
<feature type="strand" evidence="11">
    <location>
        <begin position="126"/>
        <end position="134"/>
    </location>
</feature>
<feature type="turn" evidence="11">
    <location>
        <begin position="135"/>
        <end position="138"/>
    </location>
</feature>
<feature type="strand" evidence="10">
    <location>
        <begin position="139"/>
        <end position="141"/>
    </location>
</feature>
<feature type="strand" evidence="11">
    <location>
        <begin position="148"/>
        <end position="150"/>
    </location>
</feature>
<feature type="strand" evidence="11">
    <location>
        <begin position="152"/>
        <end position="155"/>
    </location>
</feature>
<feature type="strand" evidence="11">
    <location>
        <begin position="157"/>
        <end position="160"/>
    </location>
</feature>
<feature type="strand" evidence="11">
    <location>
        <begin position="162"/>
        <end position="166"/>
    </location>
</feature>
<feature type="strand" evidence="11">
    <location>
        <begin position="169"/>
        <end position="175"/>
    </location>
</feature>
<feature type="turn" evidence="11">
    <location>
        <begin position="189"/>
        <end position="191"/>
    </location>
</feature>
<feature type="strand" evidence="11">
    <location>
        <begin position="192"/>
        <end position="196"/>
    </location>
</feature>
<feature type="helix" evidence="11">
    <location>
        <begin position="199"/>
        <end position="204"/>
    </location>
</feature>
<feature type="strand" evidence="11">
    <location>
        <begin position="207"/>
        <end position="210"/>
    </location>
</feature>
<feature type="strand" evidence="11">
    <location>
        <begin position="212"/>
        <end position="214"/>
    </location>
</feature>
<feature type="strand" evidence="11">
    <location>
        <begin position="216"/>
        <end position="227"/>
    </location>
</feature>
<feature type="strand" evidence="11">
    <location>
        <begin position="233"/>
        <end position="238"/>
    </location>
</feature>
<feature type="strand" evidence="11">
    <location>
        <begin position="248"/>
        <end position="253"/>
    </location>
</feature>
<feature type="strand" evidence="11">
    <location>
        <begin position="263"/>
        <end position="271"/>
    </location>
</feature>
<feature type="strand" evidence="13">
    <location>
        <begin position="276"/>
        <end position="278"/>
    </location>
</feature>
<feature type="strand" evidence="9">
    <location>
        <begin position="283"/>
        <end position="285"/>
    </location>
</feature>
<feature type="turn" evidence="11">
    <location>
        <begin position="289"/>
        <end position="293"/>
    </location>
</feature>
<feature type="strand" evidence="11">
    <location>
        <begin position="296"/>
        <end position="305"/>
    </location>
</feature>
<feature type="strand" evidence="11">
    <location>
        <begin position="308"/>
        <end position="329"/>
    </location>
</feature>
<feature type="turn" evidence="11">
    <location>
        <begin position="330"/>
        <end position="333"/>
    </location>
</feature>
<feature type="strand" evidence="11">
    <location>
        <begin position="334"/>
        <end position="336"/>
    </location>
</feature>
<feature type="helix" evidence="11">
    <location>
        <begin position="339"/>
        <end position="341"/>
    </location>
</feature>
<feature type="strand" evidence="11">
    <location>
        <begin position="342"/>
        <end position="346"/>
    </location>
</feature>
<feature type="strand" evidence="11">
    <location>
        <begin position="348"/>
        <end position="350"/>
    </location>
</feature>
<feature type="strand" evidence="11">
    <location>
        <begin position="352"/>
        <end position="356"/>
    </location>
</feature>
<feature type="strand" evidence="11">
    <location>
        <begin position="366"/>
        <end position="374"/>
    </location>
</feature>
<feature type="strand" evidence="12">
    <location>
        <begin position="376"/>
        <end position="378"/>
    </location>
</feature>
<feature type="strand" evidence="11">
    <location>
        <begin position="380"/>
        <end position="388"/>
    </location>
</feature>
<feature type="turn" evidence="10">
    <location>
        <begin position="391"/>
        <end position="393"/>
    </location>
</feature>
<feature type="strand" evidence="11">
    <location>
        <begin position="396"/>
        <end position="398"/>
    </location>
</feature>
<feature type="strand" evidence="11">
    <location>
        <begin position="401"/>
        <end position="403"/>
    </location>
</feature>
<feature type="strand" evidence="11">
    <location>
        <begin position="405"/>
        <end position="411"/>
    </location>
</feature>
<feature type="strand" evidence="11">
    <location>
        <begin position="413"/>
        <end position="421"/>
    </location>
</feature>
<feature type="helix" evidence="11">
    <location>
        <begin position="423"/>
        <end position="425"/>
    </location>
</feature>
<feature type="strand" evidence="11">
    <location>
        <begin position="430"/>
        <end position="438"/>
    </location>
</feature>
<feature type="strand" evidence="11">
    <location>
        <begin position="443"/>
        <end position="450"/>
    </location>
</feature>
<feature type="turn" evidence="11">
    <location>
        <begin position="452"/>
        <end position="454"/>
    </location>
</feature>
<feature type="strand" evidence="11">
    <location>
        <begin position="455"/>
        <end position="462"/>
    </location>
</feature>
<feature type="strand" evidence="11">
    <location>
        <begin position="466"/>
        <end position="473"/>
    </location>
</feature>
<feature type="strand" evidence="11">
    <location>
        <begin position="475"/>
        <end position="478"/>
    </location>
</feature>
<feature type="strand" evidence="11">
    <location>
        <begin position="480"/>
        <end position="488"/>
    </location>
</feature>
<feature type="strand" evidence="11">
    <location>
        <begin position="491"/>
        <end position="496"/>
    </location>
</feature>
<feature type="helix" evidence="11">
    <location>
        <begin position="499"/>
        <end position="504"/>
    </location>
</feature>
<feature type="helix" evidence="11">
    <location>
        <begin position="505"/>
        <end position="507"/>
    </location>
</feature>
<feature type="strand" evidence="11">
    <location>
        <begin position="512"/>
        <end position="520"/>
    </location>
</feature>
<feature type="strand" evidence="11">
    <location>
        <begin position="523"/>
        <end position="531"/>
    </location>
</feature>
<feature type="strand" evidence="11">
    <location>
        <begin position="541"/>
        <end position="547"/>
    </location>
</feature>
<feature type="helix" evidence="11">
    <location>
        <begin position="564"/>
        <end position="570"/>
    </location>
</feature>
<feature type="strand" evidence="11">
    <location>
        <begin position="575"/>
        <end position="579"/>
    </location>
</feature>
<feature type="strand" evidence="11">
    <location>
        <begin position="585"/>
        <end position="587"/>
    </location>
</feature>
<feature type="helix" evidence="11">
    <location>
        <begin position="589"/>
        <end position="592"/>
    </location>
</feature>
<feature type="helix" evidence="11">
    <location>
        <begin position="593"/>
        <end position="595"/>
    </location>
</feature>
<feature type="turn" evidence="11">
    <location>
        <begin position="599"/>
        <end position="601"/>
    </location>
</feature>
<feature type="helix" evidence="11">
    <location>
        <begin position="602"/>
        <end position="616"/>
    </location>
</feature>
<feature type="strand" evidence="11">
    <location>
        <begin position="620"/>
        <end position="630"/>
    </location>
</feature>
<feature type="helix" evidence="11">
    <location>
        <begin position="632"/>
        <end position="641"/>
    </location>
</feature>
<feature type="turn" evidence="11">
    <location>
        <begin position="642"/>
        <end position="644"/>
    </location>
</feature>
<feature type="strand" evidence="11">
    <location>
        <begin position="649"/>
        <end position="655"/>
    </location>
</feature>
<feature type="helix" evidence="11">
    <location>
        <begin position="660"/>
        <end position="662"/>
    </location>
</feature>
<feature type="helix" evidence="11">
    <location>
        <begin position="665"/>
        <end position="672"/>
    </location>
</feature>
<feature type="turn" evidence="11">
    <location>
        <begin position="677"/>
        <end position="680"/>
    </location>
</feature>
<feature type="helix" evidence="11">
    <location>
        <begin position="681"/>
        <end position="686"/>
    </location>
</feature>
<feature type="helix" evidence="11">
    <location>
        <begin position="690"/>
        <end position="698"/>
    </location>
</feature>
<feature type="strand" evidence="11">
    <location>
        <begin position="699"/>
        <end position="706"/>
    </location>
</feature>
<feature type="strand" evidence="11">
    <location>
        <begin position="710"/>
        <end position="712"/>
    </location>
</feature>
<feature type="helix" evidence="11">
    <location>
        <begin position="714"/>
        <end position="726"/>
    </location>
</feature>
<feature type="strand" evidence="11">
    <location>
        <begin position="732"/>
        <end position="736"/>
    </location>
</feature>
<feature type="helix" evidence="11">
    <location>
        <begin position="746"/>
        <end position="764"/>
    </location>
</feature>
<sequence>MKTPWKVLLGLLGVAALVTIITVPVVLLNKDEAAADSRRTYTLADYLKNTFRVKSYSLRWVSDSEYLYKQENNILLFNAEHGNSSIFLENSTFEIFGDSISDYSVSPDRLFVLLEYNYVKQWRHSYTASYSIYDLNKRQLITEEKIPNNTQWITWSQEGHKLAYVWKNDIYVKIEPHLPSHRITSTGKENVIFNGINDWVYEEEIFGAYSALWWSPNGTFLAYAQFNDTGVPLIEYSFYSDESLQYPKTVWIPYPKAGAVNPTVKFFIVNTDSLSSTTTTIPMQITAPASVTTGDHYLCDVAWVSEDRISLQWLRRIQNYSVMAICDYDKTTLVWNCPTTQEHIETSATGWCGRFRPAEPHFTSDGSSFYKIVSDKDGYKHICQFQKDRKPEQVCTFITKGAWEVISIEALTSDYLYYISNEYKEMPGGRNLYKIQLTDHTNKKCLSCDLNPERCQYYSVSLSKEAKYYQLGCRGPGLPLYTLHRSTDQKELRVLEDNSALDKMLQDVQMPSKKLDFIVLNETRFWYQMILPPHFDKSKKYPLLIDVYAGPCSQKADAAFRLNWATYLASTENIIVASFDGRGSGYQGDKIMHAINKRLGTLEVEDQIEAARQFLKMGFVDSKRVAIWGWSYGGYVTSMVLGSGSGVFKCGIAVAPVSRWEYYDSVYTERYMGLPTPEDNLDHYRNSTVMSRAENFKQVEYLLIHGTADDNVHFQQSAQISKALVDAGVDFQAMWYTDEDHGIASSTAHQHIYSHMSHFLQQCFSLR</sequence>
<protein>
    <recommendedName>
        <fullName>Dipeptidyl peptidase 4</fullName>
        <ecNumber evidence="2">3.4.14.5</ecNumber>
    </recommendedName>
    <alternativeName>
        <fullName>Bile canaliculus domain-specific membrane glycoprotein</fullName>
    </alternativeName>
    <alternativeName>
        <fullName>Dipeptidyl peptidase IV</fullName>
        <shortName>DPP IV</shortName>
    </alternativeName>
    <alternativeName>
        <fullName>GP110 glycoprotein</fullName>
    </alternativeName>
    <alternativeName>
        <fullName>T-cell activation antigen CD26</fullName>
    </alternativeName>
    <cdAntigenName>CD26</cdAntigenName>
    <component>
        <recommendedName>
            <fullName>Dipeptidyl peptidase 4 membrane form</fullName>
        </recommendedName>
        <alternativeName>
            <fullName>Dipeptidyl peptidase IV membrane form</fullName>
        </alternativeName>
    </component>
    <component>
        <recommendedName>
            <fullName>Dipeptidyl peptidase 4 soluble form</fullName>
        </recommendedName>
        <alternativeName>
            <fullName>Dipeptidyl peptidase IV soluble form</fullName>
        </alternativeName>
    </component>
    <component>
        <recommendedName>
            <fullName>Dipeptidyl peptidase 4 60 kDa soluble form</fullName>
        </recommendedName>
        <alternativeName>
            <fullName>Dipeptidyl peptidase IV 60 kDa soluble form</fullName>
        </alternativeName>
    </component>
</protein>
<gene>
    <name type="primary">Dpp4</name>
    <name type="synonym">Cd26</name>
</gene>
<name>DPP4_RAT</name>
<comment type="function">
    <text evidence="2">Cell surface glycoprotein receptor involved in the costimulatory signal essential for T-cell receptor (TCR)-mediated T-cell activation. Acts as a positive regulator of T-cell coactivation, by binding at least ADA, CAV1, IGF2R, and PTPRC. Its binding to CAV1 and CARD11 induces T-cell proliferation and NF-kappa-B activation in a T-cell receptor/CD3-dependent manner. Its interaction with ADA also regulates lymphocyte-epithelial cell adhesion. In association with FAP is involved in the pericellular proteolysis of the extracellular matrix (ECM), the migration and invasion of endothelial cells into the ECM. May be involved in the promotion of lymphatic endothelial cells adhesion, migration and tube formation. When overexpressed, enhanced cell proliferation, a process inhibited by GPC3. Also acts as a serine exopeptidase with a dipeptidyl peptidase activity that regulates various physiological processes by cleaving peptides in the circulation, including many chemokines, mitogenic growth factors, neuropeptides and peptide hormones. Removes N-terminal dipeptides sequentially from polypeptides having unsubstituted N-termini provided that the penultimate residue is proline.</text>
</comment>
<comment type="catalytic activity">
    <reaction evidence="2 4">
        <text>Release of an N-terminal dipeptide, Xaa-Yaa-|-Zaa-, from a polypeptide, preferentially when Yaa is Pro, provided Zaa is neither Pro nor hydroxyproline.</text>
        <dbReference type="EC" id="3.4.14.5"/>
    </reaction>
</comment>
<comment type="activity regulation">
    <text evidence="5">Inhibited by GPC3 and diprotin A.</text>
</comment>
<comment type="subunit">
    <text evidence="2">Monomer. Homodimer. Heterodimer with Seprase (FAP). Requires homodimerization for optimal dipeptidyl peptidase activity and T-cell costimulation. Found in a membrane raft complex, at least composed of BCL10, CARD11, DPP4 and IKBKB. Associates with collagen. Interacts with PTPRC; the interaction is enhanced in an interleukin-12-dependent manner in activated lymphocytes. Interacts (via extracellular domain) with ADA; does not inhibit its dipeptidyl peptidase activity. Interacts with CAV1 (via the N-terminus); the interaction is direct. Interacts (via cytoplasmic tail) with CARD11 (via PDZ domain); its homodimerization is necessary for interaction with CARD11. Interacts with IGF2R; the interaction is direct. Interacts with GPC3.</text>
</comment>
<comment type="subcellular location">
    <molecule>Dipeptidyl peptidase 4 soluble form</molecule>
    <subcellularLocation>
        <location>Secreted</location>
    </subcellularLocation>
    <text evidence="1">Detected in the serum and the seminal fluid.</text>
</comment>
<comment type="subcellular location">
    <subcellularLocation>
        <location>Cell membrane</location>
        <topology>Single-pass type II membrane protein</topology>
    </subcellularLocation>
    <subcellularLocation>
        <location evidence="1">Apical cell membrane</location>
        <topology evidence="1">Single-pass type II membrane protein</topology>
    </subcellularLocation>
    <subcellularLocation>
        <location evidence="1">Cell projection</location>
        <location evidence="1">Invadopodium membrane</location>
        <topology evidence="1">Single-pass type II membrane protein</topology>
    </subcellularLocation>
    <subcellularLocation>
        <location evidence="1">Cell projection</location>
        <location evidence="1">Lamellipodium membrane</location>
        <topology evidence="1">Single-pass type II membrane protein</topology>
    </subcellularLocation>
    <subcellularLocation>
        <location evidence="1">Cell junction</location>
    </subcellularLocation>
    <subcellularLocation>
        <location evidence="1">Membrane raft</location>
    </subcellularLocation>
    <text evidence="1">Translocated to the apical membrane through the concerted action of N- and O-Glycans and its association with lipid microdomains containing cholesterol and sphingolipids. Redistributed to membrane rafts in T-cell in an interleukin-12-dependent activation. Its interaction with CAV1 is necessary for its translocation to membrane rafts. Colocalized with PTPRC in membrane rafts. Colocalized with FAP in invadopodia and lamellipodia of migratory activated endothelial cells in collagenous matrix. Colocalized with FAP on endothelial cells of capillary-like microvessels but not large vessels within invasive breast ductal carcinoma. Colocalized with ADA at the cell junction in lymphocyte-epithelial cell adhesion. Colocalized with IGF2R in internalized cytoplasmic vesicles adjacent to the cell surface (By similarity).</text>
</comment>
<comment type="tissue specificity">
    <text evidence="6">Expressed in bile ducts and other epithelial brush borders (small intestine, kidney, colon, pancreatic duct); acinar structures in salivary glands; endothelial structures and T cell areas in thymus, spleen and lymph node.</text>
</comment>
<comment type="PTM">
    <text evidence="1">The soluble form (Dipeptidyl peptidase 4 soluble form also named SDPP) derives from the membrane form (Dipeptidyl peptidase 4 membrane form also named MDPP) by proteolytic processing.</text>
</comment>
<comment type="PTM">
    <text evidence="1">N- and O-Glycosylated.</text>
</comment>
<comment type="PTM">
    <text evidence="1">Phosphorylated. Mannose 6-phosphate residues in the carbohydrate moiety are necessary for interaction with IGF2R in activated T-cells. Mannose 6-phosphorylation is induced during T-cell activation (By similarity).</text>
</comment>
<comment type="similarity">
    <text evidence="8">Belongs to the peptidase S9B family. DPPIV subfamily.</text>
</comment>
<accession>P14740</accession>
<dbReference type="EC" id="3.4.14.5" evidence="2"/>
<dbReference type="EMBL" id="J04591">
    <property type="protein sequence ID" value="AAA41096.1"/>
    <property type="molecule type" value="mRNA"/>
</dbReference>
<dbReference type="EMBL" id="J02997">
    <property type="protein sequence ID" value="AAA41272.1"/>
    <property type="molecule type" value="mRNA"/>
</dbReference>
<dbReference type="PIR" id="A39914">
    <property type="entry name" value="A39914"/>
</dbReference>
<dbReference type="RefSeq" id="NP_036921.1">
    <property type="nucleotide sequence ID" value="NM_012789.1"/>
</dbReference>
<dbReference type="PDB" id="2GBC">
    <property type="method" value="X-ray"/>
    <property type="resolution" value="2.80 A"/>
    <property type="chains" value="A/B=38-767"/>
</dbReference>
<dbReference type="PDB" id="2GBF">
    <property type="method" value="X-ray"/>
    <property type="resolution" value="3.10 A"/>
    <property type="chains" value="A/B=38-767"/>
</dbReference>
<dbReference type="PDB" id="2GBG">
    <property type="method" value="X-ray"/>
    <property type="resolution" value="3.00 A"/>
    <property type="chains" value="A/B=38-767"/>
</dbReference>
<dbReference type="PDB" id="2GBI">
    <property type="method" value="X-ray"/>
    <property type="resolution" value="3.30 A"/>
    <property type="chains" value="A/B=38-767"/>
</dbReference>
<dbReference type="PDB" id="2I3Z">
    <property type="method" value="X-ray"/>
    <property type="resolution" value="2.90 A"/>
    <property type="chains" value="A/B=38-767"/>
</dbReference>
<dbReference type="PDB" id="2OAE">
    <property type="method" value="X-ray"/>
    <property type="resolution" value="3.00 A"/>
    <property type="chains" value="A/B=38-767"/>
</dbReference>
<dbReference type="PDB" id="4FFV">
    <property type="method" value="X-ray"/>
    <property type="resolution" value="2.40 A"/>
    <property type="chains" value="A/B=38-767"/>
</dbReference>
<dbReference type="PDB" id="4FFW">
    <property type="method" value="X-ray"/>
    <property type="resolution" value="2.90 A"/>
    <property type="chains" value="A/B=38-767"/>
</dbReference>
<dbReference type="PDB" id="5VTA">
    <property type="method" value="X-ray"/>
    <property type="resolution" value="2.80 A"/>
    <property type="chains" value="A/B/C/D=37-767"/>
</dbReference>
<dbReference type="PDBsum" id="2GBC"/>
<dbReference type="PDBsum" id="2GBF"/>
<dbReference type="PDBsum" id="2GBG"/>
<dbReference type="PDBsum" id="2GBI"/>
<dbReference type="PDBsum" id="2I3Z"/>
<dbReference type="PDBsum" id="2OAE"/>
<dbReference type="PDBsum" id="4FFV"/>
<dbReference type="PDBsum" id="4FFW"/>
<dbReference type="PDBsum" id="5VTA"/>
<dbReference type="SMR" id="P14740"/>
<dbReference type="FunCoup" id="P14740">
    <property type="interactions" value="560"/>
</dbReference>
<dbReference type="IntAct" id="P14740">
    <property type="interactions" value="1"/>
</dbReference>
<dbReference type="MINT" id="P14740"/>
<dbReference type="STRING" id="10116.ENSRNOP00000072092"/>
<dbReference type="BindingDB" id="P14740"/>
<dbReference type="ChEMBL" id="CHEMBL4653"/>
<dbReference type="DrugCentral" id="P14740"/>
<dbReference type="ESTHER" id="ratno-dpp4">
    <property type="family name" value="DPP4N_Peptidase_S9"/>
</dbReference>
<dbReference type="MEROPS" id="S09.003"/>
<dbReference type="GlyCosmos" id="P14740">
    <property type="glycosylation" value="8 sites, No reported glycans"/>
</dbReference>
<dbReference type="GlyGen" id="P14740">
    <property type="glycosylation" value="8 sites"/>
</dbReference>
<dbReference type="iPTMnet" id="P14740"/>
<dbReference type="PhosphoSitePlus" id="P14740"/>
<dbReference type="SwissPalm" id="P14740"/>
<dbReference type="PaxDb" id="10116-ENSRNOP00000045536"/>
<dbReference type="ABCD" id="P14740">
    <property type="antibodies" value="3 sequenced antibodies"/>
</dbReference>
<dbReference type="GeneID" id="25253"/>
<dbReference type="KEGG" id="rno:25253"/>
<dbReference type="UCSC" id="RGD:2515">
    <property type="organism name" value="rat"/>
</dbReference>
<dbReference type="AGR" id="RGD:2515"/>
<dbReference type="CTD" id="1803"/>
<dbReference type="RGD" id="2515">
    <property type="gene designation" value="Dpp4"/>
</dbReference>
<dbReference type="eggNOG" id="KOG2100">
    <property type="taxonomic scope" value="Eukaryota"/>
</dbReference>
<dbReference type="InParanoid" id="P14740"/>
<dbReference type="PhylomeDB" id="P14740"/>
<dbReference type="BRENDA" id="3.4.14.5">
    <property type="organism ID" value="5301"/>
</dbReference>
<dbReference type="Reactome" id="R-RNO-381771">
    <property type="pathway name" value="Synthesis, secretion, and inactivation of Glucagon-like Peptide-1 (GLP-1)"/>
</dbReference>
<dbReference type="Reactome" id="R-RNO-400511">
    <property type="pathway name" value="Synthesis, secretion, and inactivation of Glucose-dependent Insulinotropic Polypeptide (GIP)"/>
</dbReference>
<dbReference type="EvolutionaryTrace" id="P14740"/>
<dbReference type="PRO" id="PR:P14740"/>
<dbReference type="Proteomes" id="UP000002494">
    <property type="component" value="Unplaced"/>
</dbReference>
<dbReference type="GO" id="GO:0016324">
    <property type="term" value="C:apical plasma membrane"/>
    <property type="evidence" value="ECO:0000266"/>
    <property type="project" value="RGD"/>
</dbReference>
<dbReference type="GO" id="GO:0009986">
    <property type="term" value="C:cell surface"/>
    <property type="evidence" value="ECO:0000314"/>
    <property type="project" value="RGD"/>
</dbReference>
<dbReference type="GO" id="GO:0030139">
    <property type="term" value="C:endocytic vesicle"/>
    <property type="evidence" value="ECO:0000250"/>
    <property type="project" value="UniProtKB"/>
</dbReference>
<dbReference type="GO" id="GO:0005576">
    <property type="term" value="C:extracellular region"/>
    <property type="evidence" value="ECO:0007669"/>
    <property type="project" value="UniProtKB-SubCell"/>
</dbReference>
<dbReference type="GO" id="GO:0046581">
    <property type="term" value="C:intercellular canaliculus"/>
    <property type="evidence" value="ECO:0000266"/>
    <property type="project" value="RGD"/>
</dbReference>
<dbReference type="GO" id="GO:0030027">
    <property type="term" value="C:lamellipodium"/>
    <property type="evidence" value="ECO:0000250"/>
    <property type="project" value="UniProtKB"/>
</dbReference>
<dbReference type="GO" id="GO:0031258">
    <property type="term" value="C:lamellipodium membrane"/>
    <property type="evidence" value="ECO:0007669"/>
    <property type="project" value="UniProtKB-SubCell"/>
</dbReference>
<dbReference type="GO" id="GO:0045121">
    <property type="term" value="C:membrane raft"/>
    <property type="evidence" value="ECO:0007669"/>
    <property type="project" value="UniProtKB-SubCell"/>
</dbReference>
<dbReference type="GO" id="GO:0005886">
    <property type="term" value="C:plasma membrane"/>
    <property type="evidence" value="ECO:0000266"/>
    <property type="project" value="RGD"/>
</dbReference>
<dbReference type="GO" id="GO:0004177">
    <property type="term" value="F:aminopeptidase activity"/>
    <property type="evidence" value="ECO:0007669"/>
    <property type="project" value="UniProtKB-KW"/>
</dbReference>
<dbReference type="GO" id="GO:0045499">
    <property type="term" value="F:chemorepellent activity"/>
    <property type="evidence" value="ECO:0000266"/>
    <property type="project" value="RGD"/>
</dbReference>
<dbReference type="GO" id="GO:0005518">
    <property type="term" value="F:collagen binding"/>
    <property type="evidence" value="ECO:0000314"/>
    <property type="project" value="RGD"/>
</dbReference>
<dbReference type="GO" id="GO:0008239">
    <property type="term" value="F:dipeptidyl-peptidase activity"/>
    <property type="evidence" value="ECO:0000314"/>
    <property type="project" value="RGD"/>
</dbReference>
<dbReference type="GO" id="GO:0042802">
    <property type="term" value="F:identical protein binding"/>
    <property type="evidence" value="ECO:0000315"/>
    <property type="project" value="RGD"/>
</dbReference>
<dbReference type="GO" id="GO:0042277">
    <property type="term" value="F:peptide binding"/>
    <property type="evidence" value="ECO:0000314"/>
    <property type="project" value="RGD"/>
</dbReference>
<dbReference type="GO" id="GO:0002020">
    <property type="term" value="F:protease binding"/>
    <property type="evidence" value="ECO:0000250"/>
    <property type="project" value="UniProtKB"/>
</dbReference>
<dbReference type="GO" id="GO:0042803">
    <property type="term" value="F:protein homodimerization activity"/>
    <property type="evidence" value="ECO:0000250"/>
    <property type="project" value="UniProtKB"/>
</dbReference>
<dbReference type="GO" id="GO:0004252">
    <property type="term" value="F:serine-type endopeptidase activity"/>
    <property type="evidence" value="ECO:0000266"/>
    <property type="project" value="RGD"/>
</dbReference>
<dbReference type="GO" id="GO:0008236">
    <property type="term" value="F:serine-type peptidase activity"/>
    <property type="evidence" value="ECO:0000266"/>
    <property type="project" value="RGD"/>
</dbReference>
<dbReference type="GO" id="GO:0005102">
    <property type="term" value="F:signaling receptor binding"/>
    <property type="evidence" value="ECO:0000250"/>
    <property type="project" value="UniProtKB"/>
</dbReference>
<dbReference type="GO" id="GO:0001618">
    <property type="term" value="F:virus receptor activity"/>
    <property type="evidence" value="ECO:0000266"/>
    <property type="project" value="RGD"/>
</dbReference>
<dbReference type="GO" id="GO:0002337">
    <property type="term" value="P:B-1a B cell differentiation"/>
    <property type="evidence" value="ECO:0000315"/>
    <property type="project" value="RGD"/>
</dbReference>
<dbReference type="GO" id="GO:0001662">
    <property type="term" value="P:behavioral fear response"/>
    <property type="evidence" value="ECO:0000266"/>
    <property type="project" value="RGD"/>
</dbReference>
<dbReference type="GO" id="GO:0007155">
    <property type="term" value="P:cell adhesion"/>
    <property type="evidence" value="ECO:0007669"/>
    <property type="project" value="UniProtKB-KW"/>
</dbReference>
<dbReference type="GO" id="GO:0043542">
    <property type="term" value="P:endothelial cell migration"/>
    <property type="evidence" value="ECO:0000250"/>
    <property type="project" value="UniProtKB"/>
</dbReference>
<dbReference type="GO" id="GO:0035641">
    <property type="term" value="P:locomotory exploration behavior"/>
    <property type="evidence" value="ECO:0000266"/>
    <property type="project" value="RGD"/>
</dbReference>
<dbReference type="GO" id="GO:0010716">
    <property type="term" value="P:negative regulation of extracellular matrix disassembly"/>
    <property type="evidence" value="ECO:0000250"/>
    <property type="project" value="UniProtKB"/>
</dbReference>
<dbReference type="GO" id="GO:0090024">
    <property type="term" value="P:negative regulation of neutrophil chemotaxis"/>
    <property type="evidence" value="ECO:0000266"/>
    <property type="project" value="RGD"/>
</dbReference>
<dbReference type="GO" id="GO:0008284">
    <property type="term" value="P:positive regulation of cell population proliferation"/>
    <property type="evidence" value="ECO:0000250"/>
    <property type="project" value="UniProtKB"/>
</dbReference>
<dbReference type="GO" id="GO:0002717">
    <property type="term" value="P:positive regulation of natural killer cell mediated immunity"/>
    <property type="evidence" value="ECO:0000315"/>
    <property type="project" value="RGD"/>
</dbReference>
<dbReference type="GO" id="GO:0030163">
    <property type="term" value="P:protein catabolic process"/>
    <property type="evidence" value="ECO:0000314"/>
    <property type="project" value="RGD"/>
</dbReference>
<dbReference type="GO" id="GO:0006508">
    <property type="term" value="P:proteolysis"/>
    <property type="evidence" value="ECO:0000266"/>
    <property type="project" value="RGD"/>
</dbReference>
<dbReference type="GO" id="GO:0036343">
    <property type="term" value="P:psychomotor behavior"/>
    <property type="evidence" value="ECO:0000266"/>
    <property type="project" value="RGD"/>
</dbReference>
<dbReference type="GO" id="GO:0033632">
    <property type="term" value="P:regulation of cell-cell adhesion mediated by integrin"/>
    <property type="evidence" value="ECO:0000266"/>
    <property type="project" value="RGD"/>
</dbReference>
<dbReference type="GO" id="GO:0002709">
    <property type="term" value="P:regulation of T cell mediated immunity"/>
    <property type="evidence" value="ECO:0000315"/>
    <property type="project" value="RGD"/>
</dbReference>
<dbReference type="GO" id="GO:0001666">
    <property type="term" value="P:response to hypoxia"/>
    <property type="evidence" value="ECO:0000266"/>
    <property type="project" value="RGD"/>
</dbReference>
<dbReference type="GO" id="GO:0042110">
    <property type="term" value="P:T cell activation"/>
    <property type="evidence" value="ECO:0000266"/>
    <property type="project" value="RGD"/>
</dbReference>
<dbReference type="GO" id="GO:0031295">
    <property type="term" value="P:T cell costimulation"/>
    <property type="evidence" value="ECO:0000250"/>
    <property type="project" value="UniProtKB"/>
</dbReference>
<dbReference type="FunFam" id="2.140.10.30:FF:000001">
    <property type="entry name" value="Dipeptidyl peptidase 4"/>
    <property type="match status" value="1"/>
</dbReference>
<dbReference type="FunFam" id="3.40.50.1820:FF:000003">
    <property type="entry name" value="Dipeptidyl peptidase 4"/>
    <property type="match status" value="1"/>
</dbReference>
<dbReference type="Gene3D" id="3.40.50.1820">
    <property type="entry name" value="alpha/beta hydrolase"/>
    <property type="match status" value="1"/>
</dbReference>
<dbReference type="Gene3D" id="2.140.10.30">
    <property type="entry name" value="Dipeptidylpeptidase IV, N-terminal domain"/>
    <property type="match status" value="1"/>
</dbReference>
<dbReference type="InterPro" id="IPR029058">
    <property type="entry name" value="AB_hydrolase_fold"/>
</dbReference>
<dbReference type="InterPro" id="IPR040522">
    <property type="entry name" value="DPPIV_rep"/>
</dbReference>
<dbReference type="InterPro" id="IPR002471">
    <property type="entry name" value="Pept_S9_AS"/>
</dbReference>
<dbReference type="InterPro" id="IPR001375">
    <property type="entry name" value="Peptidase_S9_cat"/>
</dbReference>
<dbReference type="InterPro" id="IPR002469">
    <property type="entry name" value="Peptidase_S9B_N"/>
</dbReference>
<dbReference type="InterPro" id="IPR050278">
    <property type="entry name" value="Serine_Prot_S9B/DPPIV"/>
</dbReference>
<dbReference type="PANTHER" id="PTHR11731:SF128">
    <property type="entry name" value="DIPEPTIDYL PEPTIDASE 4"/>
    <property type="match status" value="1"/>
</dbReference>
<dbReference type="PANTHER" id="PTHR11731">
    <property type="entry name" value="PROTEASE FAMILY S9B,C DIPEPTIDYL-PEPTIDASE IV-RELATED"/>
    <property type="match status" value="1"/>
</dbReference>
<dbReference type="Pfam" id="PF00930">
    <property type="entry name" value="DPPIV_N"/>
    <property type="match status" value="1"/>
</dbReference>
<dbReference type="Pfam" id="PF18811">
    <property type="entry name" value="DPPIV_rep"/>
    <property type="match status" value="1"/>
</dbReference>
<dbReference type="Pfam" id="PF00326">
    <property type="entry name" value="Peptidase_S9"/>
    <property type="match status" value="1"/>
</dbReference>
<dbReference type="SUPFAM" id="SSF53474">
    <property type="entry name" value="alpha/beta-Hydrolases"/>
    <property type="match status" value="1"/>
</dbReference>
<dbReference type="SUPFAM" id="SSF82171">
    <property type="entry name" value="DPP6 N-terminal domain-like"/>
    <property type="match status" value="1"/>
</dbReference>
<dbReference type="PROSITE" id="PS00708">
    <property type="entry name" value="PRO_ENDOPEP_SER"/>
    <property type="match status" value="1"/>
</dbReference>
<organism>
    <name type="scientific">Rattus norvegicus</name>
    <name type="common">Rat</name>
    <dbReference type="NCBI Taxonomy" id="10116"/>
    <lineage>
        <taxon>Eukaryota</taxon>
        <taxon>Metazoa</taxon>
        <taxon>Chordata</taxon>
        <taxon>Craniata</taxon>
        <taxon>Vertebrata</taxon>
        <taxon>Euteleostomi</taxon>
        <taxon>Mammalia</taxon>
        <taxon>Eutheria</taxon>
        <taxon>Euarchontoglires</taxon>
        <taxon>Glires</taxon>
        <taxon>Rodentia</taxon>
        <taxon>Myomorpha</taxon>
        <taxon>Muroidea</taxon>
        <taxon>Muridae</taxon>
        <taxon>Murinae</taxon>
        <taxon>Rattus</taxon>
    </lineage>
</organism>
<evidence type="ECO:0000250" key="1"/>
<evidence type="ECO:0000250" key="2">
    <source>
        <dbReference type="UniProtKB" id="P27487"/>
    </source>
</evidence>
<evidence type="ECO:0000255" key="3"/>
<evidence type="ECO:0000255" key="4">
    <source>
        <dbReference type="PROSITE-ProRule" id="PRU10084"/>
    </source>
</evidence>
<evidence type="ECO:0000269" key="5">
    <source>
    </source>
</evidence>
<evidence type="ECO:0000269" key="6">
    <source>
    </source>
</evidence>
<evidence type="ECO:0000269" key="7">
    <source>
    </source>
</evidence>
<evidence type="ECO:0000305" key="8"/>
<evidence type="ECO:0007829" key="9">
    <source>
        <dbReference type="PDB" id="2GBC"/>
    </source>
</evidence>
<evidence type="ECO:0007829" key="10">
    <source>
        <dbReference type="PDB" id="2I3Z"/>
    </source>
</evidence>
<evidence type="ECO:0007829" key="11">
    <source>
        <dbReference type="PDB" id="4FFV"/>
    </source>
</evidence>
<evidence type="ECO:0007829" key="12">
    <source>
        <dbReference type="PDB" id="4FFW"/>
    </source>
</evidence>
<evidence type="ECO:0007829" key="13">
    <source>
        <dbReference type="PDB" id="5VTA"/>
    </source>
</evidence>
<proteinExistence type="evidence at protein level"/>